<accession>Q8FQV5</accession>
<dbReference type="EMBL" id="BA000035">
    <property type="protein sequence ID" value="BAC17822.1"/>
    <property type="molecule type" value="Genomic_DNA"/>
</dbReference>
<dbReference type="RefSeq" id="WP_011075235.1">
    <property type="nucleotide sequence ID" value="NC_004369.1"/>
</dbReference>
<dbReference type="SMR" id="Q8FQV5"/>
<dbReference type="STRING" id="196164.gene:10741418"/>
<dbReference type="KEGG" id="cef:CE1012"/>
<dbReference type="eggNOG" id="COG1825">
    <property type="taxonomic scope" value="Bacteria"/>
</dbReference>
<dbReference type="HOGENOM" id="CLU_075939_1_0_11"/>
<dbReference type="OrthoDB" id="5242980at2"/>
<dbReference type="Proteomes" id="UP000001409">
    <property type="component" value="Chromosome"/>
</dbReference>
<dbReference type="GO" id="GO:0022625">
    <property type="term" value="C:cytosolic large ribosomal subunit"/>
    <property type="evidence" value="ECO:0007669"/>
    <property type="project" value="TreeGrafter"/>
</dbReference>
<dbReference type="GO" id="GO:0008097">
    <property type="term" value="F:5S rRNA binding"/>
    <property type="evidence" value="ECO:0007669"/>
    <property type="project" value="InterPro"/>
</dbReference>
<dbReference type="GO" id="GO:0003735">
    <property type="term" value="F:structural constituent of ribosome"/>
    <property type="evidence" value="ECO:0007669"/>
    <property type="project" value="InterPro"/>
</dbReference>
<dbReference type="GO" id="GO:0006412">
    <property type="term" value="P:translation"/>
    <property type="evidence" value="ECO:0007669"/>
    <property type="project" value="UniProtKB-UniRule"/>
</dbReference>
<dbReference type="CDD" id="cd00495">
    <property type="entry name" value="Ribosomal_L25_TL5_CTC"/>
    <property type="match status" value="1"/>
</dbReference>
<dbReference type="Gene3D" id="2.170.120.20">
    <property type="entry name" value="Ribosomal protein L25, beta domain"/>
    <property type="match status" value="1"/>
</dbReference>
<dbReference type="Gene3D" id="2.40.240.10">
    <property type="entry name" value="Ribosomal Protein L25, Chain P"/>
    <property type="match status" value="1"/>
</dbReference>
<dbReference type="HAMAP" id="MF_01334">
    <property type="entry name" value="Ribosomal_bL25_CTC"/>
    <property type="match status" value="1"/>
</dbReference>
<dbReference type="InterPro" id="IPR020056">
    <property type="entry name" value="Rbsml_bL25/Gln-tRNA_synth_N"/>
</dbReference>
<dbReference type="InterPro" id="IPR011035">
    <property type="entry name" value="Ribosomal_bL25/Gln-tRNA_synth"/>
</dbReference>
<dbReference type="InterPro" id="IPR020057">
    <property type="entry name" value="Ribosomal_bL25_b-dom"/>
</dbReference>
<dbReference type="InterPro" id="IPR037121">
    <property type="entry name" value="Ribosomal_bL25_C"/>
</dbReference>
<dbReference type="InterPro" id="IPR001021">
    <property type="entry name" value="Ribosomal_bL25_long"/>
</dbReference>
<dbReference type="InterPro" id="IPR029751">
    <property type="entry name" value="Ribosomal_L25_dom"/>
</dbReference>
<dbReference type="InterPro" id="IPR020930">
    <property type="entry name" value="Ribosomal_uL5_bac-type"/>
</dbReference>
<dbReference type="NCBIfam" id="TIGR00731">
    <property type="entry name" value="bL25_bact_ctc"/>
    <property type="match status" value="1"/>
</dbReference>
<dbReference type="NCBIfam" id="NF004131">
    <property type="entry name" value="PRK05618.2-1"/>
    <property type="match status" value="1"/>
</dbReference>
<dbReference type="PANTHER" id="PTHR33284">
    <property type="entry name" value="RIBOSOMAL PROTEIN L25/GLN-TRNA SYNTHETASE, ANTI-CODON-BINDING DOMAIN-CONTAINING PROTEIN"/>
    <property type="match status" value="1"/>
</dbReference>
<dbReference type="PANTHER" id="PTHR33284:SF1">
    <property type="entry name" value="RIBOSOMAL PROTEIN L25_GLN-TRNA SYNTHETASE, ANTI-CODON-BINDING DOMAIN-CONTAINING PROTEIN"/>
    <property type="match status" value="1"/>
</dbReference>
<dbReference type="Pfam" id="PF01386">
    <property type="entry name" value="Ribosomal_L25p"/>
    <property type="match status" value="1"/>
</dbReference>
<dbReference type="Pfam" id="PF14693">
    <property type="entry name" value="Ribosomal_TL5_C"/>
    <property type="match status" value="1"/>
</dbReference>
<dbReference type="SUPFAM" id="SSF50715">
    <property type="entry name" value="Ribosomal protein L25-like"/>
    <property type="match status" value="1"/>
</dbReference>
<keyword id="KW-1185">Reference proteome</keyword>
<keyword id="KW-0687">Ribonucleoprotein</keyword>
<keyword id="KW-0689">Ribosomal protein</keyword>
<keyword id="KW-0694">RNA-binding</keyword>
<keyword id="KW-0699">rRNA-binding</keyword>
<gene>
    <name evidence="1" type="primary">rplY</name>
    <name evidence="1" type="synonym">ctc</name>
    <name type="ordered locus">CE1012</name>
</gene>
<name>RL25_COREF</name>
<feature type="chain" id="PRO_0000181540" description="Large ribosomal subunit protein bL25">
    <location>
        <begin position="1"/>
        <end position="202"/>
    </location>
</feature>
<sequence>MANKFETIEAANRTEFGKGSARRARVAGLVPAVVYGADMESNLHITLNHRDFAGLVRRNGVNAVMELDVEGVKQLAMIKHIDQNVLTFNIDHVDLLAITRGEKVEVEIPVIVEGQPAPNTMFVQDADTIRVEADALNIPEEIVVSIEGMELGSQITAGDIKLDDDMTLVDDAELLIANVVLPAVEEAPAEDEEGESEGESEA</sequence>
<evidence type="ECO:0000255" key="1">
    <source>
        <dbReference type="HAMAP-Rule" id="MF_01334"/>
    </source>
</evidence>
<evidence type="ECO:0000305" key="2"/>
<organism>
    <name type="scientific">Corynebacterium efficiens (strain DSM 44549 / YS-314 / AJ 12310 / JCM 11189 / NBRC 100395)</name>
    <dbReference type="NCBI Taxonomy" id="196164"/>
    <lineage>
        <taxon>Bacteria</taxon>
        <taxon>Bacillati</taxon>
        <taxon>Actinomycetota</taxon>
        <taxon>Actinomycetes</taxon>
        <taxon>Mycobacteriales</taxon>
        <taxon>Corynebacteriaceae</taxon>
        <taxon>Corynebacterium</taxon>
    </lineage>
</organism>
<reference key="1">
    <citation type="journal article" date="2003" name="Genome Res.">
        <title>Comparative complete genome sequence analysis of the amino acid replacements responsible for the thermostability of Corynebacterium efficiens.</title>
        <authorList>
            <person name="Nishio Y."/>
            <person name="Nakamura Y."/>
            <person name="Kawarabayasi Y."/>
            <person name="Usuda Y."/>
            <person name="Kimura E."/>
            <person name="Sugimoto S."/>
            <person name="Matsui K."/>
            <person name="Yamagishi A."/>
            <person name="Kikuchi H."/>
            <person name="Ikeo K."/>
            <person name="Gojobori T."/>
        </authorList>
    </citation>
    <scope>NUCLEOTIDE SEQUENCE [LARGE SCALE GENOMIC DNA]</scope>
    <source>
        <strain>DSM 44549 / YS-314 / AJ 12310 / JCM 11189 / NBRC 100395</strain>
    </source>
</reference>
<protein>
    <recommendedName>
        <fullName evidence="1">Large ribosomal subunit protein bL25</fullName>
    </recommendedName>
    <alternativeName>
        <fullName evidence="2">50S ribosomal protein L25</fullName>
    </alternativeName>
    <alternativeName>
        <fullName evidence="1">General stress protein CTC</fullName>
    </alternativeName>
</protein>
<proteinExistence type="inferred from homology"/>
<comment type="function">
    <text evidence="1">This is one of the proteins that binds to the 5S RNA in the ribosome where it forms part of the central protuberance.</text>
</comment>
<comment type="subunit">
    <text evidence="1">Part of the 50S ribosomal subunit; part of the 5S rRNA/L5/L18/L25 subcomplex. Contacts the 5S rRNA. Binds to the 5S rRNA independently of L5 and L18.</text>
</comment>
<comment type="similarity">
    <text evidence="1">Belongs to the bacterial ribosomal protein bL25 family. CTC subfamily.</text>
</comment>